<organism>
    <name type="scientific">Schizosaccharomyces pombe (strain 972 / ATCC 24843)</name>
    <name type="common">Fission yeast</name>
    <dbReference type="NCBI Taxonomy" id="284812"/>
    <lineage>
        <taxon>Eukaryota</taxon>
        <taxon>Fungi</taxon>
        <taxon>Dikarya</taxon>
        <taxon>Ascomycota</taxon>
        <taxon>Taphrinomycotina</taxon>
        <taxon>Schizosaccharomycetes</taxon>
        <taxon>Schizosaccharomycetales</taxon>
        <taxon>Schizosaccharomycetaceae</taxon>
        <taxon>Schizosaccharomyces</taxon>
    </lineage>
</organism>
<proteinExistence type="inferred from homology"/>
<feature type="signal peptide" evidence="1">
    <location>
        <begin position="1"/>
        <end position="22"/>
    </location>
</feature>
<feature type="chain" id="PRO_0000304063" description="Uncharacterized protein C16G5.06">
    <location>
        <begin position="23"/>
        <end position="230"/>
    </location>
</feature>
<feature type="topological domain" description="Lumenal" evidence="1">
    <location>
        <begin position="23"/>
        <end position="167"/>
    </location>
</feature>
<feature type="transmembrane region" description="Helical" evidence="1">
    <location>
        <begin position="168"/>
        <end position="188"/>
    </location>
</feature>
<feature type="topological domain" description="Cytoplasmic" evidence="1">
    <location>
        <begin position="189"/>
        <end position="230"/>
    </location>
</feature>
<feature type="region of interest" description="Disordered" evidence="2">
    <location>
        <begin position="55"/>
        <end position="90"/>
    </location>
</feature>
<feature type="region of interest" description="Disordered" evidence="2">
    <location>
        <begin position="208"/>
        <end position="230"/>
    </location>
</feature>
<comment type="subcellular location">
    <subcellularLocation>
        <location evidence="3">Endoplasmic reticulum membrane</location>
        <topology evidence="3">Single-pass membrane protein</topology>
    </subcellularLocation>
</comment>
<reference key="1">
    <citation type="journal article" date="2002" name="Nature">
        <title>The genome sequence of Schizosaccharomyces pombe.</title>
        <authorList>
            <person name="Wood V."/>
            <person name="Gwilliam R."/>
            <person name="Rajandream M.A."/>
            <person name="Lyne M.H."/>
            <person name="Lyne R."/>
            <person name="Stewart A."/>
            <person name="Sgouros J.G."/>
            <person name="Peat N."/>
            <person name="Hayles J."/>
            <person name="Baker S.G."/>
            <person name="Basham D."/>
            <person name="Bowman S."/>
            <person name="Brooks K."/>
            <person name="Brown D."/>
            <person name="Brown S."/>
            <person name="Chillingworth T."/>
            <person name="Churcher C.M."/>
            <person name="Collins M."/>
            <person name="Connor R."/>
            <person name="Cronin A."/>
            <person name="Davis P."/>
            <person name="Feltwell T."/>
            <person name="Fraser A."/>
            <person name="Gentles S."/>
            <person name="Goble A."/>
            <person name="Hamlin N."/>
            <person name="Harris D.E."/>
            <person name="Hidalgo J."/>
            <person name="Hodgson G."/>
            <person name="Holroyd S."/>
            <person name="Hornsby T."/>
            <person name="Howarth S."/>
            <person name="Huckle E.J."/>
            <person name="Hunt S."/>
            <person name="Jagels K."/>
            <person name="James K.D."/>
            <person name="Jones L."/>
            <person name="Jones M."/>
            <person name="Leather S."/>
            <person name="McDonald S."/>
            <person name="McLean J."/>
            <person name="Mooney P."/>
            <person name="Moule S."/>
            <person name="Mungall K.L."/>
            <person name="Murphy L.D."/>
            <person name="Niblett D."/>
            <person name="Odell C."/>
            <person name="Oliver K."/>
            <person name="O'Neil S."/>
            <person name="Pearson D."/>
            <person name="Quail M.A."/>
            <person name="Rabbinowitsch E."/>
            <person name="Rutherford K.M."/>
            <person name="Rutter S."/>
            <person name="Saunders D."/>
            <person name="Seeger K."/>
            <person name="Sharp S."/>
            <person name="Skelton J."/>
            <person name="Simmonds M.N."/>
            <person name="Squares R."/>
            <person name="Squares S."/>
            <person name="Stevens K."/>
            <person name="Taylor K."/>
            <person name="Taylor R.G."/>
            <person name="Tivey A."/>
            <person name="Walsh S.V."/>
            <person name="Warren T."/>
            <person name="Whitehead S."/>
            <person name="Woodward J.R."/>
            <person name="Volckaert G."/>
            <person name="Aert R."/>
            <person name="Robben J."/>
            <person name="Grymonprez B."/>
            <person name="Weltjens I."/>
            <person name="Vanstreels E."/>
            <person name="Rieger M."/>
            <person name="Schaefer M."/>
            <person name="Mueller-Auer S."/>
            <person name="Gabel C."/>
            <person name="Fuchs M."/>
            <person name="Duesterhoeft A."/>
            <person name="Fritzc C."/>
            <person name="Holzer E."/>
            <person name="Moestl D."/>
            <person name="Hilbert H."/>
            <person name="Borzym K."/>
            <person name="Langer I."/>
            <person name="Beck A."/>
            <person name="Lehrach H."/>
            <person name="Reinhardt R."/>
            <person name="Pohl T.M."/>
            <person name="Eger P."/>
            <person name="Zimmermann W."/>
            <person name="Wedler H."/>
            <person name="Wambutt R."/>
            <person name="Purnelle B."/>
            <person name="Goffeau A."/>
            <person name="Cadieu E."/>
            <person name="Dreano S."/>
            <person name="Gloux S."/>
            <person name="Lelaure V."/>
            <person name="Mottier S."/>
            <person name="Galibert F."/>
            <person name="Aves S.J."/>
            <person name="Xiang Z."/>
            <person name="Hunt C."/>
            <person name="Moore K."/>
            <person name="Hurst S.M."/>
            <person name="Lucas M."/>
            <person name="Rochet M."/>
            <person name="Gaillardin C."/>
            <person name="Tallada V.A."/>
            <person name="Garzon A."/>
            <person name="Thode G."/>
            <person name="Daga R.R."/>
            <person name="Cruzado L."/>
            <person name="Jimenez J."/>
            <person name="Sanchez M."/>
            <person name="del Rey F."/>
            <person name="Benito J."/>
            <person name="Dominguez A."/>
            <person name="Revuelta J.L."/>
            <person name="Moreno S."/>
            <person name="Armstrong J."/>
            <person name="Forsburg S.L."/>
            <person name="Cerutti L."/>
            <person name="Lowe T."/>
            <person name="McCombie W.R."/>
            <person name="Paulsen I."/>
            <person name="Potashkin J."/>
            <person name="Shpakovski G.V."/>
            <person name="Ussery D."/>
            <person name="Barrell B.G."/>
            <person name="Nurse P."/>
        </authorList>
    </citation>
    <scope>NUCLEOTIDE SEQUENCE [LARGE SCALE GENOMIC DNA]</scope>
    <source>
        <strain>972 / ATCC 24843</strain>
    </source>
</reference>
<reference key="2">
    <citation type="journal article" date="2006" name="Nat. Biotechnol.">
        <title>ORFeome cloning and global analysis of protein localization in the fission yeast Schizosaccharomyces pombe.</title>
        <authorList>
            <person name="Matsuyama A."/>
            <person name="Arai R."/>
            <person name="Yashiroda Y."/>
            <person name="Shirai A."/>
            <person name="Kamata A."/>
            <person name="Sekido S."/>
            <person name="Kobayashi Y."/>
            <person name="Hashimoto A."/>
            <person name="Hamamoto M."/>
            <person name="Hiraoka Y."/>
            <person name="Horinouchi S."/>
            <person name="Yoshida M."/>
        </authorList>
    </citation>
    <scope>SUBCELLULAR LOCATION [LARGE SCALE ANALYSIS]</scope>
</reference>
<dbReference type="EMBL" id="CU329671">
    <property type="protein sequence ID" value="CAA19026.1"/>
    <property type="molecule type" value="Genomic_DNA"/>
</dbReference>
<dbReference type="PIR" id="T39598">
    <property type="entry name" value="T39598"/>
</dbReference>
<dbReference type="RefSeq" id="NP_596755.1">
    <property type="nucleotide sequence ID" value="NM_001023775.2"/>
</dbReference>
<dbReference type="BioGRID" id="276715">
    <property type="interactions" value="21"/>
</dbReference>
<dbReference type="iPTMnet" id="O60120"/>
<dbReference type="PaxDb" id="4896-SPBC16G5.06.1"/>
<dbReference type="EnsemblFungi" id="SPBC16G5.06.1">
    <property type="protein sequence ID" value="SPBC16G5.06.1:pep"/>
    <property type="gene ID" value="SPBC16G5.06"/>
</dbReference>
<dbReference type="KEGG" id="spo:2540182"/>
<dbReference type="PomBase" id="SPBC16G5.06"/>
<dbReference type="VEuPathDB" id="FungiDB:SPBC16G5.06"/>
<dbReference type="HOGENOM" id="CLU_1240753_0_0_1"/>
<dbReference type="InParanoid" id="O60120"/>
<dbReference type="OMA" id="YVTIQPT"/>
<dbReference type="PRO" id="PR:O60120"/>
<dbReference type="Proteomes" id="UP000002485">
    <property type="component" value="Chromosome II"/>
</dbReference>
<dbReference type="GO" id="GO:0005783">
    <property type="term" value="C:endoplasmic reticulum"/>
    <property type="evidence" value="ECO:0007005"/>
    <property type="project" value="PomBase"/>
</dbReference>
<dbReference type="GO" id="GO:0005789">
    <property type="term" value="C:endoplasmic reticulum membrane"/>
    <property type="evidence" value="ECO:0007669"/>
    <property type="project" value="UniProtKB-SubCell"/>
</dbReference>
<accession>O60120</accession>
<protein>
    <recommendedName>
        <fullName>Uncharacterized protein C16G5.06</fullName>
    </recommendedName>
</protein>
<evidence type="ECO:0000255" key="1"/>
<evidence type="ECO:0000256" key="2">
    <source>
        <dbReference type="SAM" id="MobiDB-lite"/>
    </source>
</evidence>
<evidence type="ECO:0000269" key="3">
    <source>
    </source>
</evidence>
<name>YH76_SCHPO</name>
<keyword id="KW-0256">Endoplasmic reticulum</keyword>
<keyword id="KW-0472">Membrane</keyword>
<keyword id="KW-1185">Reference proteome</keyword>
<keyword id="KW-0732">Signal</keyword>
<keyword id="KW-0812">Transmembrane</keyword>
<keyword id="KW-1133">Transmembrane helix</keyword>
<sequence>MNIRSFLLISIFTAISYLVVDGATPRTFAPSASVSINYGTLSTVFPSLYRRASTSSSSSSSSISTSHDSQPSTSSSSPSSTSTSSSSGTSVITASDVSASNEIISSSTNNSIHQQVSVVTEYVTIQPTTYVTTIFQYTSLASTIAAQSGIASLVPQTYTPYGGVKALIGILVGVVVGSVFLLAIVMVIARIWGPRLLANKDQNNNNEDLDSNLVSKDSEGTPQITYASNF</sequence>
<gene>
    <name type="ORF">SPBC16G5.06</name>
</gene>